<reference key="1">
    <citation type="journal article" date="2002" name="Nature">
        <title>Comparison of the genomes of two Xanthomonas pathogens with differing host specificities.</title>
        <authorList>
            <person name="da Silva A.C.R."/>
            <person name="Ferro J.A."/>
            <person name="Reinach F.C."/>
            <person name="Farah C.S."/>
            <person name="Furlan L.R."/>
            <person name="Quaggio R.B."/>
            <person name="Monteiro-Vitorello C.B."/>
            <person name="Van Sluys M.A."/>
            <person name="Almeida N.F. Jr."/>
            <person name="Alves L.M.C."/>
            <person name="do Amaral A.M."/>
            <person name="Bertolini M.C."/>
            <person name="Camargo L.E.A."/>
            <person name="Camarotte G."/>
            <person name="Cannavan F."/>
            <person name="Cardozo J."/>
            <person name="Chambergo F."/>
            <person name="Ciapina L.P."/>
            <person name="Cicarelli R.M.B."/>
            <person name="Coutinho L.L."/>
            <person name="Cursino-Santos J.R."/>
            <person name="El-Dorry H."/>
            <person name="Faria J.B."/>
            <person name="Ferreira A.J.S."/>
            <person name="Ferreira R.C.C."/>
            <person name="Ferro M.I.T."/>
            <person name="Formighieri E.F."/>
            <person name="Franco M.C."/>
            <person name="Greggio C.C."/>
            <person name="Gruber A."/>
            <person name="Katsuyama A.M."/>
            <person name="Kishi L.T."/>
            <person name="Leite R.P."/>
            <person name="Lemos E.G.M."/>
            <person name="Lemos M.V.F."/>
            <person name="Locali E.C."/>
            <person name="Machado M.A."/>
            <person name="Madeira A.M.B.N."/>
            <person name="Martinez-Rossi N.M."/>
            <person name="Martins E.C."/>
            <person name="Meidanis J."/>
            <person name="Menck C.F.M."/>
            <person name="Miyaki C.Y."/>
            <person name="Moon D.H."/>
            <person name="Moreira L.M."/>
            <person name="Novo M.T.M."/>
            <person name="Okura V.K."/>
            <person name="Oliveira M.C."/>
            <person name="Oliveira V.R."/>
            <person name="Pereira H.A."/>
            <person name="Rossi A."/>
            <person name="Sena J.A.D."/>
            <person name="Silva C."/>
            <person name="de Souza R.F."/>
            <person name="Spinola L.A.F."/>
            <person name="Takita M.A."/>
            <person name="Tamura R.E."/>
            <person name="Teixeira E.C."/>
            <person name="Tezza R.I.D."/>
            <person name="Trindade dos Santos M."/>
            <person name="Truffi D."/>
            <person name="Tsai S.M."/>
            <person name="White F.F."/>
            <person name="Setubal J.C."/>
            <person name="Kitajima J.P."/>
        </authorList>
    </citation>
    <scope>NUCLEOTIDE SEQUENCE [LARGE SCALE GENOMIC DNA]</scope>
    <source>
        <strain>ATCC 33913 / DSM 3586 / NCPPB 528 / LMG 568 / P 25</strain>
    </source>
</reference>
<evidence type="ECO:0000255" key="1">
    <source>
        <dbReference type="HAMAP-Rule" id="MF_00825"/>
    </source>
</evidence>
<feature type="chain" id="PRO_0000245482" description="3-hydroxyanthranilate 3,4-dioxygenase">
    <location>
        <begin position="1"/>
        <end position="176"/>
    </location>
</feature>
<feature type="binding site" evidence="1">
    <location>
        <position position="44"/>
    </location>
    <ligand>
        <name>O2</name>
        <dbReference type="ChEBI" id="CHEBI:15379"/>
    </ligand>
</feature>
<feature type="binding site" evidence="1">
    <location>
        <position position="48"/>
    </location>
    <ligand>
        <name>Fe cation</name>
        <dbReference type="ChEBI" id="CHEBI:24875"/>
        <label>1</label>
        <note>catalytic</note>
    </ligand>
</feature>
<feature type="binding site" evidence="1">
    <location>
        <position position="54"/>
    </location>
    <ligand>
        <name>Fe cation</name>
        <dbReference type="ChEBI" id="CHEBI:24875"/>
        <label>1</label>
        <note>catalytic</note>
    </ligand>
</feature>
<feature type="binding site" evidence="1">
    <location>
        <position position="54"/>
    </location>
    <ligand>
        <name>substrate</name>
    </ligand>
</feature>
<feature type="binding site" evidence="1">
    <location>
        <position position="92"/>
    </location>
    <ligand>
        <name>Fe cation</name>
        <dbReference type="ChEBI" id="CHEBI:24875"/>
        <label>1</label>
        <note>catalytic</note>
    </ligand>
</feature>
<feature type="binding site" evidence="1">
    <location>
        <position position="96"/>
    </location>
    <ligand>
        <name>substrate</name>
    </ligand>
</feature>
<feature type="binding site" evidence="1">
    <location>
        <position position="106"/>
    </location>
    <ligand>
        <name>substrate</name>
    </ligand>
</feature>
<feature type="binding site" evidence="1">
    <location>
        <position position="121"/>
    </location>
    <ligand>
        <name>Fe cation</name>
        <dbReference type="ChEBI" id="CHEBI:24875"/>
        <label>2</label>
    </ligand>
</feature>
<feature type="binding site" evidence="1">
    <location>
        <position position="124"/>
    </location>
    <ligand>
        <name>Fe cation</name>
        <dbReference type="ChEBI" id="CHEBI:24875"/>
        <label>2</label>
    </ligand>
</feature>
<feature type="binding site" evidence="1">
    <location>
        <position position="158"/>
    </location>
    <ligand>
        <name>Fe cation</name>
        <dbReference type="ChEBI" id="CHEBI:24875"/>
        <label>2</label>
    </ligand>
</feature>
<feature type="binding site" evidence="1">
    <location>
        <position position="161"/>
    </location>
    <ligand>
        <name>Fe cation</name>
        <dbReference type="ChEBI" id="CHEBI:24875"/>
        <label>2</label>
    </ligand>
</feature>
<protein>
    <recommendedName>
        <fullName evidence="1">3-hydroxyanthranilate 3,4-dioxygenase</fullName>
        <ecNumber evidence="1">1.13.11.6</ecNumber>
    </recommendedName>
    <alternativeName>
        <fullName evidence="1">3-hydroxyanthranilate oxygenase</fullName>
        <shortName evidence="1">3-HAO</shortName>
    </alternativeName>
    <alternativeName>
        <fullName evidence="1">3-hydroxyanthranilic acid dioxygenase</fullName>
        <shortName evidence="1">HAD</shortName>
    </alternativeName>
</protein>
<dbReference type="EC" id="1.13.11.6" evidence="1"/>
<dbReference type="EMBL" id="AE008922">
    <property type="protein sequence ID" value="AAM40850.1"/>
    <property type="molecule type" value="Genomic_DNA"/>
</dbReference>
<dbReference type="RefSeq" id="NP_636926.1">
    <property type="nucleotide sequence ID" value="NC_003902.1"/>
</dbReference>
<dbReference type="RefSeq" id="WP_011036739.1">
    <property type="nucleotide sequence ID" value="NC_003902.1"/>
</dbReference>
<dbReference type="SMR" id="Q8PAD0"/>
<dbReference type="STRING" id="190485.XCC1555"/>
<dbReference type="EnsemblBacteria" id="AAM40850">
    <property type="protein sequence ID" value="AAM40850"/>
    <property type="gene ID" value="XCC1555"/>
</dbReference>
<dbReference type="KEGG" id="xcc:XCC1555"/>
<dbReference type="PATRIC" id="fig|190485.4.peg.1668"/>
<dbReference type="eggNOG" id="COG0662">
    <property type="taxonomic scope" value="Bacteria"/>
</dbReference>
<dbReference type="HOGENOM" id="CLU_095765_0_0_6"/>
<dbReference type="OrthoDB" id="5002379at2"/>
<dbReference type="UniPathway" id="UPA00253">
    <property type="reaction ID" value="UER00330"/>
</dbReference>
<dbReference type="Proteomes" id="UP000001010">
    <property type="component" value="Chromosome"/>
</dbReference>
<dbReference type="GO" id="GO:0000334">
    <property type="term" value="F:3-hydroxyanthranilate 3,4-dioxygenase activity"/>
    <property type="evidence" value="ECO:0007669"/>
    <property type="project" value="UniProtKB-UniRule"/>
</dbReference>
<dbReference type="GO" id="GO:0008198">
    <property type="term" value="F:ferrous iron binding"/>
    <property type="evidence" value="ECO:0007669"/>
    <property type="project" value="UniProtKB-UniRule"/>
</dbReference>
<dbReference type="GO" id="GO:0043420">
    <property type="term" value="P:anthranilate metabolic process"/>
    <property type="evidence" value="ECO:0007669"/>
    <property type="project" value="UniProtKB-UniRule"/>
</dbReference>
<dbReference type="GO" id="GO:0006569">
    <property type="term" value="P:L-tryptophan catabolic process"/>
    <property type="evidence" value="ECO:0007669"/>
    <property type="project" value="UniProtKB-UniRule"/>
</dbReference>
<dbReference type="GO" id="GO:0009435">
    <property type="term" value="P:NAD biosynthetic process"/>
    <property type="evidence" value="ECO:0007669"/>
    <property type="project" value="UniProtKB-UniPathway"/>
</dbReference>
<dbReference type="GO" id="GO:0019805">
    <property type="term" value="P:quinolinate biosynthetic process"/>
    <property type="evidence" value="ECO:0007669"/>
    <property type="project" value="UniProtKB-UniRule"/>
</dbReference>
<dbReference type="CDD" id="cd06123">
    <property type="entry name" value="cupin_HAO"/>
    <property type="match status" value="1"/>
</dbReference>
<dbReference type="Gene3D" id="2.60.120.10">
    <property type="entry name" value="Jelly Rolls"/>
    <property type="match status" value="1"/>
</dbReference>
<dbReference type="HAMAP" id="MF_00825">
    <property type="entry name" value="3_HAO"/>
    <property type="match status" value="1"/>
</dbReference>
<dbReference type="InterPro" id="IPR010329">
    <property type="entry name" value="3hydroanth_dOase"/>
</dbReference>
<dbReference type="InterPro" id="IPR014710">
    <property type="entry name" value="RmlC-like_jellyroll"/>
</dbReference>
<dbReference type="InterPro" id="IPR011051">
    <property type="entry name" value="RmlC_Cupin_sf"/>
</dbReference>
<dbReference type="NCBIfam" id="TIGR03037">
    <property type="entry name" value="anthran_nbaC"/>
    <property type="match status" value="1"/>
</dbReference>
<dbReference type="NCBIfam" id="NF009763">
    <property type="entry name" value="PRK13264.1"/>
    <property type="match status" value="1"/>
</dbReference>
<dbReference type="PANTHER" id="PTHR15497">
    <property type="entry name" value="3-HYDROXYANTHRANILATE 3,4-DIOXYGENASE"/>
    <property type="match status" value="1"/>
</dbReference>
<dbReference type="PANTHER" id="PTHR15497:SF1">
    <property type="entry name" value="3-HYDROXYANTHRANILATE 3,4-DIOXYGENASE"/>
    <property type="match status" value="1"/>
</dbReference>
<dbReference type="Pfam" id="PF06052">
    <property type="entry name" value="3-HAO"/>
    <property type="match status" value="1"/>
</dbReference>
<dbReference type="SUPFAM" id="SSF51182">
    <property type="entry name" value="RmlC-like cupins"/>
    <property type="match status" value="1"/>
</dbReference>
<comment type="function">
    <text evidence="1">Catalyzes the oxidative ring opening of 3-hydroxyanthranilate to 2-amino-3-carboxymuconate semialdehyde, which spontaneously cyclizes to quinolinate.</text>
</comment>
<comment type="catalytic activity">
    <reaction evidence="1">
        <text>3-hydroxyanthranilate + O2 = (2Z,4Z)-2-amino-3-carboxymuconate 6-semialdehyde</text>
        <dbReference type="Rhea" id="RHEA:17953"/>
        <dbReference type="ChEBI" id="CHEBI:15379"/>
        <dbReference type="ChEBI" id="CHEBI:36559"/>
        <dbReference type="ChEBI" id="CHEBI:77612"/>
        <dbReference type="EC" id="1.13.11.6"/>
    </reaction>
</comment>
<comment type="cofactor">
    <cofactor evidence="1">
        <name>Fe(2+)</name>
        <dbReference type="ChEBI" id="CHEBI:29033"/>
    </cofactor>
    <text evidence="1">Binds 2 Fe(2+) ions per subunit.</text>
</comment>
<comment type="pathway">
    <text evidence="1">Cofactor biosynthesis; NAD(+) biosynthesis; quinolinate from L-kynurenine: step 3/3.</text>
</comment>
<comment type="subunit">
    <text evidence="1">Homodimer.</text>
</comment>
<comment type="similarity">
    <text evidence="1">Belongs to the 3-HAO family.</text>
</comment>
<accession>Q8PAD0</accession>
<gene>
    <name evidence="1" type="primary">nbaC</name>
    <name type="ordered locus">XCC1555</name>
</gene>
<keyword id="KW-0223">Dioxygenase</keyword>
<keyword id="KW-0408">Iron</keyword>
<keyword id="KW-0479">Metal-binding</keyword>
<keyword id="KW-0560">Oxidoreductase</keyword>
<keyword id="KW-0662">Pyridine nucleotide biosynthesis</keyword>
<keyword id="KW-1185">Reference proteome</keyword>
<name>3HAO_XANCP</name>
<proteinExistence type="inferred from homology"/>
<organism>
    <name type="scientific">Xanthomonas campestris pv. campestris (strain ATCC 33913 / DSM 3586 / NCPPB 528 / LMG 568 / P 25)</name>
    <dbReference type="NCBI Taxonomy" id="190485"/>
    <lineage>
        <taxon>Bacteria</taxon>
        <taxon>Pseudomonadati</taxon>
        <taxon>Pseudomonadota</taxon>
        <taxon>Gammaproteobacteria</taxon>
        <taxon>Lysobacterales</taxon>
        <taxon>Lysobacteraceae</taxon>
        <taxon>Xanthomonas</taxon>
    </lineage>
</organism>
<sequence>MLVPPINLHAWVEQHRHLLKPPVGNKCIQQDGFIIMIVGGPNARTDYHYDEGPEWFFQLEGEMVLKVQDDGTARDIPIRAGEIFLLPPKVPHSPQRAAGSIGLVIERERLPHEQDGLQWYCPQCNHKLYEAMFPLENIETDFPPVFDHFYRSLALRTCTQCGHVHPAPERYAAVEA</sequence>